<protein>
    <recommendedName>
        <fullName>F-actin-capping protein subunit beta</fullName>
    </recommendedName>
</protein>
<gene>
    <name type="primary">cap2</name>
    <name type="ORF">AN0290</name>
</gene>
<keyword id="KW-0117">Actin capping</keyword>
<keyword id="KW-0009">Actin-binding</keyword>
<keyword id="KW-0963">Cytoplasm</keyword>
<keyword id="KW-0206">Cytoskeleton</keyword>
<keyword id="KW-1185">Reference proteome</keyword>
<organism>
    <name type="scientific">Emericella nidulans (strain FGSC A4 / ATCC 38163 / CBS 112.46 / NRRL 194 / M139)</name>
    <name type="common">Aspergillus nidulans</name>
    <dbReference type="NCBI Taxonomy" id="227321"/>
    <lineage>
        <taxon>Eukaryota</taxon>
        <taxon>Fungi</taxon>
        <taxon>Dikarya</taxon>
        <taxon>Ascomycota</taxon>
        <taxon>Pezizomycotina</taxon>
        <taxon>Eurotiomycetes</taxon>
        <taxon>Eurotiomycetidae</taxon>
        <taxon>Eurotiales</taxon>
        <taxon>Aspergillaceae</taxon>
        <taxon>Aspergillus</taxon>
        <taxon>Aspergillus subgen. Nidulantes</taxon>
    </lineage>
</organism>
<accession>Q5BGP0</accession>
<accession>C8VUA6</accession>
<dbReference type="EMBL" id="AACD01000006">
    <property type="protein sequence ID" value="EAA65696.1"/>
    <property type="molecule type" value="Genomic_DNA"/>
</dbReference>
<dbReference type="EMBL" id="BN001308">
    <property type="protein sequence ID" value="CBF89791.1"/>
    <property type="molecule type" value="Genomic_DNA"/>
</dbReference>
<dbReference type="RefSeq" id="XP_657894.1">
    <property type="nucleotide sequence ID" value="XM_652802.1"/>
</dbReference>
<dbReference type="SMR" id="Q5BGP0"/>
<dbReference type="FunCoup" id="Q5BGP0">
    <property type="interactions" value="862"/>
</dbReference>
<dbReference type="STRING" id="227321.Q5BGP0"/>
<dbReference type="EnsemblFungi" id="CBF89791">
    <property type="protein sequence ID" value="CBF89791"/>
    <property type="gene ID" value="ANIA_00290"/>
</dbReference>
<dbReference type="KEGG" id="ani:ANIA_00290"/>
<dbReference type="VEuPathDB" id="FungiDB:AN0290"/>
<dbReference type="eggNOG" id="KOG3174">
    <property type="taxonomic scope" value="Eukaryota"/>
</dbReference>
<dbReference type="HOGENOM" id="CLU_045864_1_0_1"/>
<dbReference type="InParanoid" id="Q5BGP0"/>
<dbReference type="OMA" id="WSNKYYP"/>
<dbReference type="OrthoDB" id="9979678at2759"/>
<dbReference type="Proteomes" id="UP000000560">
    <property type="component" value="Chromosome VIII"/>
</dbReference>
<dbReference type="GO" id="GO:0099079">
    <property type="term" value="C:actin body"/>
    <property type="evidence" value="ECO:0007669"/>
    <property type="project" value="EnsemblFungi"/>
</dbReference>
<dbReference type="GO" id="GO:0030479">
    <property type="term" value="C:actin cortical patch"/>
    <property type="evidence" value="ECO:0000318"/>
    <property type="project" value="GO_Central"/>
</dbReference>
<dbReference type="GO" id="GO:0000142">
    <property type="term" value="C:cellular bud neck contractile ring"/>
    <property type="evidence" value="ECO:0007669"/>
    <property type="project" value="EnsemblFungi"/>
</dbReference>
<dbReference type="GO" id="GO:0005934">
    <property type="term" value="C:cellular bud tip"/>
    <property type="evidence" value="ECO:0007669"/>
    <property type="project" value="EnsemblFungi"/>
</dbReference>
<dbReference type="GO" id="GO:0008290">
    <property type="term" value="C:F-actin capping protein complex"/>
    <property type="evidence" value="ECO:0000318"/>
    <property type="project" value="GO_Central"/>
</dbReference>
<dbReference type="GO" id="GO:0000131">
    <property type="term" value="C:incipient cellular bud site"/>
    <property type="evidence" value="ECO:0007669"/>
    <property type="project" value="EnsemblFungi"/>
</dbReference>
<dbReference type="GO" id="GO:0043332">
    <property type="term" value="C:mating projection tip"/>
    <property type="evidence" value="ECO:0007669"/>
    <property type="project" value="EnsemblFungi"/>
</dbReference>
<dbReference type="GO" id="GO:0031097">
    <property type="term" value="C:medial cortex"/>
    <property type="evidence" value="ECO:0007669"/>
    <property type="project" value="EnsemblFungi"/>
</dbReference>
<dbReference type="GO" id="GO:0005634">
    <property type="term" value="C:nucleus"/>
    <property type="evidence" value="ECO:0007669"/>
    <property type="project" value="EnsemblFungi"/>
</dbReference>
<dbReference type="GO" id="GO:0051015">
    <property type="term" value="F:actin filament binding"/>
    <property type="evidence" value="ECO:0000318"/>
    <property type="project" value="GO_Central"/>
</dbReference>
<dbReference type="GO" id="GO:0044396">
    <property type="term" value="P:actin cortical patch organization"/>
    <property type="evidence" value="ECO:0007669"/>
    <property type="project" value="EnsemblFungi"/>
</dbReference>
<dbReference type="GO" id="GO:0051016">
    <property type="term" value="P:barbed-end actin filament capping"/>
    <property type="evidence" value="ECO:0000318"/>
    <property type="project" value="GO_Central"/>
</dbReference>
<dbReference type="GO" id="GO:0000902">
    <property type="term" value="P:cell morphogenesis"/>
    <property type="evidence" value="ECO:0000318"/>
    <property type="project" value="GO_Central"/>
</dbReference>
<dbReference type="GO" id="GO:0030447">
    <property type="term" value="P:filamentous growth"/>
    <property type="evidence" value="ECO:0007669"/>
    <property type="project" value="EnsemblFungi"/>
</dbReference>
<dbReference type="GO" id="GO:1904600">
    <property type="term" value="P:mating projection actin fusion focus assembly"/>
    <property type="evidence" value="ECO:0007669"/>
    <property type="project" value="EnsemblFungi"/>
</dbReference>
<dbReference type="GO" id="GO:1903475">
    <property type="term" value="P:mitotic actomyosin contractile ring assembly"/>
    <property type="evidence" value="ECO:0007669"/>
    <property type="project" value="EnsemblFungi"/>
</dbReference>
<dbReference type="GO" id="GO:1902404">
    <property type="term" value="P:mitotic actomyosin contractile ring contraction"/>
    <property type="evidence" value="ECO:0007669"/>
    <property type="project" value="EnsemblFungi"/>
</dbReference>
<dbReference type="FunFam" id="1.20.58.570:FF:000001">
    <property type="entry name" value="F-actin-capping protein subunit beta"/>
    <property type="match status" value="1"/>
</dbReference>
<dbReference type="FunFam" id="3.90.1150.210:FF:000005">
    <property type="entry name" value="F-actin-capping protein subunit beta"/>
    <property type="match status" value="1"/>
</dbReference>
<dbReference type="Gene3D" id="1.20.58.570">
    <property type="match status" value="1"/>
</dbReference>
<dbReference type="Gene3D" id="3.90.1150.210">
    <property type="entry name" value="F-actin capping protein, beta subunit"/>
    <property type="match status" value="1"/>
</dbReference>
<dbReference type="InterPro" id="IPR037282">
    <property type="entry name" value="CapZ_alpha/beta"/>
</dbReference>
<dbReference type="InterPro" id="IPR042276">
    <property type="entry name" value="CapZ_alpha/beta_2"/>
</dbReference>
<dbReference type="InterPro" id="IPR001698">
    <property type="entry name" value="CAPZB"/>
</dbReference>
<dbReference type="InterPro" id="IPR043175">
    <property type="entry name" value="CAPZB_N"/>
</dbReference>
<dbReference type="InterPro" id="IPR019771">
    <property type="entry name" value="F-actin_capping_bsu_CS"/>
</dbReference>
<dbReference type="PANTHER" id="PTHR10619">
    <property type="entry name" value="F-ACTIN-CAPPING PROTEIN SUBUNIT BETA"/>
    <property type="match status" value="1"/>
</dbReference>
<dbReference type="PANTHER" id="PTHR10619:SF0">
    <property type="entry name" value="F-ACTIN-CAPPING PROTEIN SUBUNIT BETA ISOFORMS 1 AND 2"/>
    <property type="match status" value="1"/>
</dbReference>
<dbReference type="Pfam" id="PF01115">
    <property type="entry name" value="F_actin_cap_B"/>
    <property type="match status" value="1"/>
</dbReference>
<dbReference type="PRINTS" id="PR00192">
    <property type="entry name" value="FACTINCAPB"/>
</dbReference>
<dbReference type="SUPFAM" id="SSF90096">
    <property type="entry name" value="Subunits of heterodimeric actin filament capping protein Capz"/>
    <property type="match status" value="1"/>
</dbReference>
<dbReference type="PROSITE" id="PS00231">
    <property type="entry name" value="F_ACTIN_CAPPING_BETA"/>
    <property type="match status" value="1"/>
</dbReference>
<reference key="1">
    <citation type="journal article" date="2005" name="Nature">
        <title>Sequencing of Aspergillus nidulans and comparative analysis with A. fumigatus and A. oryzae.</title>
        <authorList>
            <person name="Galagan J.E."/>
            <person name="Calvo S.E."/>
            <person name="Cuomo C."/>
            <person name="Ma L.-J."/>
            <person name="Wortman J.R."/>
            <person name="Batzoglou S."/>
            <person name="Lee S.-I."/>
            <person name="Bastuerkmen M."/>
            <person name="Spevak C.C."/>
            <person name="Clutterbuck J."/>
            <person name="Kapitonov V."/>
            <person name="Jurka J."/>
            <person name="Scazzocchio C."/>
            <person name="Farman M.L."/>
            <person name="Butler J."/>
            <person name="Purcell S."/>
            <person name="Harris S."/>
            <person name="Braus G.H."/>
            <person name="Draht O."/>
            <person name="Busch S."/>
            <person name="D'Enfert C."/>
            <person name="Bouchier C."/>
            <person name="Goldman G.H."/>
            <person name="Bell-Pedersen D."/>
            <person name="Griffiths-Jones S."/>
            <person name="Doonan J.H."/>
            <person name="Yu J."/>
            <person name="Vienken K."/>
            <person name="Pain A."/>
            <person name="Freitag M."/>
            <person name="Selker E.U."/>
            <person name="Archer D.B."/>
            <person name="Penalva M.A."/>
            <person name="Oakley B.R."/>
            <person name="Momany M."/>
            <person name="Tanaka T."/>
            <person name="Kumagai T."/>
            <person name="Asai K."/>
            <person name="Machida M."/>
            <person name="Nierman W.C."/>
            <person name="Denning D.W."/>
            <person name="Caddick M.X."/>
            <person name="Hynes M."/>
            <person name="Paoletti M."/>
            <person name="Fischer R."/>
            <person name="Miller B.L."/>
            <person name="Dyer P.S."/>
            <person name="Sachs M.S."/>
            <person name="Osmani S.A."/>
            <person name="Birren B.W."/>
        </authorList>
    </citation>
    <scope>NUCLEOTIDE SEQUENCE [LARGE SCALE GENOMIC DNA]</scope>
    <source>
        <strain>FGSC A4 / ATCC 38163 / CBS 112.46 / NRRL 194 / M139</strain>
    </source>
</reference>
<reference key="2">
    <citation type="journal article" date="2009" name="Fungal Genet. Biol.">
        <title>The 2008 update of the Aspergillus nidulans genome annotation: a community effort.</title>
        <authorList>
            <person name="Wortman J.R."/>
            <person name="Gilsenan J.M."/>
            <person name="Joardar V."/>
            <person name="Deegan J."/>
            <person name="Clutterbuck J."/>
            <person name="Andersen M.R."/>
            <person name="Archer D."/>
            <person name="Bencina M."/>
            <person name="Braus G."/>
            <person name="Coutinho P."/>
            <person name="von Dohren H."/>
            <person name="Doonan J."/>
            <person name="Driessen A.J."/>
            <person name="Durek P."/>
            <person name="Espeso E."/>
            <person name="Fekete E."/>
            <person name="Flipphi M."/>
            <person name="Estrada C.G."/>
            <person name="Geysens S."/>
            <person name="Goldman G."/>
            <person name="de Groot P.W."/>
            <person name="Hansen K."/>
            <person name="Harris S.D."/>
            <person name="Heinekamp T."/>
            <person name="Helmstaedt K."/>
            <person name="Henrissat B."/>
            <person name="Hofmann G."/>
            <person name="Homan T."/>
            <person name="Horio T."/>
            <person name="Horiuchi H."/>
            <person name="James S."/>
            <person name="Jones M."/>
            <person name="Karaffa L."/>
            <person name="Karanyi Z."/>
            <person name="Kato M."/>
            <person name="Keller N."/>
            <person name="Kelly D.E."/>
            <person name="Kiel J.A."/>
            <person name="Kim J.M."/>
            <person name="van der Klei I.J."/>
            <person name="Klis F.M."/>
            <person name="Kovalchuk A."/>
            <person name="Krasevec N."/>
            <person name="Kubicek C.P."/>
            <person name="Liu B."/>
            <person name="Maccabe A."/>
            <person name="Meyer V."/>
            <person name="Mirabito P."/>
            <person name="Miskei M."/>
            <person name="Mos M."/>
            <person name="Mullins J."/>
            <person name="Nelson D.R."/>
            <person name="Nielsen J."/>
            <person name="Oakley B.R."/>
            <person name="Osmani S.A."/>
            <person name="Pakula T."/>
            <person name="Paszewski A."/>
            <person name="Paulsen I."/>
            <person name="Pilsyk S."/>
            <person name="Pocsi I."/>
            <person name="Punt P.J."/>
            <person name="Ram A.F."/>
            <person name="Ren Q."/>
            <person name="Robellet X."/>
            <person name="Robson G."/>
            <person name="Seiboth B."/>
            <person name="van Solingen P."/>
            <person name="Specht T."/>
            <person name="Sun J."/>
            <person name="Taheri-Talesh N."/>
            <person name="Takeshita N."/>
            <person name="Ussery D."/>
            <person name="vanKuyk P.A."/>
            <person name="Visser H."/>
            <person name="van de Vondervoort P.J."/>
            <person name="de Vries R.P."/>
            <person name="Walton J."/>
            <person name="Xiang X."/>
            <person name="Xiong Y."/>
            <person name="Zeng A.P."/>
            <person name="Brandt B.W."/>
            <person name="Cornell M.J."/>
            <person name="van den Hondel C.A."/>
            <person name="Visser J."/>
            <person name="Oliver S.G."/>
            <person name="Turner G."/>
        </authorList>
    </citation>
    <scope>GENOME REANNOTATION</scope>
    <source>
        <strain>FGSC A4 / ATCC 38163 / CBS 112.46 / NRRL 194 / M139</strain>
    </source>
</reference>
<name>CAPZB_EMENI</name>
<evidence type="ECO:0000250" key="1"/>
<evidence type="ECO:0000250" key="2">
    <source>
        <dbReference type="UniProtKB" id="P13517"/>
    </source>
</evidence>
<evidence type="ECO:0000250" key="3">
    <source>
        <dbReference type="UniProtKB" id="Q9HGP5"/>
    </source>
</evidence>
<evidence type="ECO:0000305" key="4"/>
<proteinExistence type="inferred from homology"/>
<sequence length="266" mass="30099">MADAQFDSALDLLRRLNPRDTKQNLQAITSIVPDLTEDLLSSVDQPLEIRRCPKTKRDYLLCDYNRDGDSYRSPWSNEFDPPLDDGTVPSERVRRLEVAANEAFDVYRELYYEGGVGSVYFWDLDDGFAGVILLKKGVSPGGKHSGEWDSIHVFEATDRGRMAHYKLTSTVILHLSNENEALGEMDLSGNMTRQIEVDMNVDSDASHVANVGKLVEDMELKMRNLLQEVYFGKAKDVVGELRSIGPLSETNRDRATHQEMIRGLQR</sequence>
<feature type="chain" id="PRO_0000256839" description="F-actin-capping protein subunit beta">
    <location>
        <begin position="1"/>
        <end position="266"/>
    </location>
</feature>
<comment type="function">
    <text evidence="1">F-actin-capping proteins bind in a Ca(2+)-independent manner to the fast growing ends of actin filaments (barbed end) thereby blocking the exchange of subunits at these ends. Unlike other capping proteins (such as gelsolin and severin), these proteins do not sever actin filaments (By similarity).</text>
</comment>
<comment type="subunit">
    <text evidence="2">Component of the F-actin capping complex, composed of a heterodimer of an alpha and a beta subunit.</text>
</comment>
<comment type="subcellular location">
    <subcellularLocation>
        <location evidence="2">Cytoplasm</location>
        <location evidence="2">Cytoskeleton</location>
        <location evidence="2">Actin patch</location>
    </subcellularLocation>
    <subcellularLocation>
        <location evidence="3">Cytoplasm</location>
        <location evidence="3">Cytoskeleton</location>
    </subcellularLocation>
</comment>
<comment type="similarity">
    <text evidence="4">Belongs to the F-actin-capping protein beta subunit family.</text>
</comment>